<organismHost>
    <name type="scientific">Bos taurus</name>
    <name type="common">Bovine</name>
    <dbReference type="NCBI Taxonomy" id="9913"/>
</organismHost>
<keyword id="KW-0106">Calcium</keyword>
<keyword id="KW-0167">Capsid protein</keyword>
<keyword id="KW-1154">Intermediate capsid protein</keyword>
<keyword id="KW-0479">Metal-binding</keyword>
<keyword id="KW-0832">Ubl conjugation</keyword>
<keyword id="KW-0946">Virion</keyword>
<keyword id="KW-0862">Zinc</keyword>
<comment type="function">
    <text evidence="1">Intermediate capsid protein that self assembles to form an icosahedral capsid with a T=13 symmetry, which consists of 230 trimers of VP6, with channels at each of its five-fold vertices. This capsid constitutes the middle concentric layer of the viral mature particle. The innermost VP2 capsid and the intermediate VP6 capsid remain intact following cell entry to protect the dsRNA from degradation and to prevent unfavorable antiviral responses in the host cell during all the replication cycle of the virus. Nascent transcripts are transcribed within the structural confines of this double-layered particle (DLP) and are extruded through the channels at the five-fold axes. VP6 is required for the transcription activity of the DLP.</text>
</comment>
<comment type="subunit">
    <text evidence="1">Homotrimer. Interacts with the inner capsid protein VP2. Interacts with the outer capsid glycoprotein VP7. Interacts with the outer capsid protein VP5*.</text>
</comment>
<comment type="subcellular location">
    <subcellularLocation>
        <location evidence="1">Virion</location>
    </subcellularLocation>
    <text evidence="1">Component of the intermediate capsid. Also found in spherical cytoplasmic structures, called virus factories, that appear early after infection and are the site of viral replication and packaging.</text>
</comment>
<comment type="PTM">
    <text evidence="1">The N-terminus is blocked.</text>
</comment>
<comment type="PTM">
    <text evidence="1">Sumoylated with SUMO1 and SUMO2. Sumoylation of viral proteins seems to have a positive role on viral replication.</text>
</comment>
<comment type="miscellaneous">
    <text evidence="1">The VP6 trimer contains a zinc ion located at the center of the molecule. The zinc ion is not essential for either trimerization or transcription activity of the DLP. Zinc-depleted VP6 has an increased sensitivity to proteases.</text>
</comment>
<comment type="similarity">
    <text evidence="1">Belongs to the rotavirus VP6 family.</text>
</comment>
<reference key="1">
    <citation type="journal article" date="2002" name="Virus Genes">
        <title>Sequence analysis of the VP4, VP6, VP7, and NSP4 gene products of the bovine rotavirus WC3.</title>
        <authorList>
            <person name="Ciarlet M."/>
            <person name="Hyser J.M."/>
            <person name="Estes M.K."/>
        </authorList>
    </citation>
    <scope>NUCLEOTIDE SEQUENCE [MRNA]</scope>
</reference>
<reference key="2">
    <citation type="submission" date="2008-10" db="EMBL/GenBank/DDBJ databases">
        <authorList>
            <person name="Ciarlet M."/>
            <person name="Hyser J.M."/>
            <person name="Estes M.K."/>
        </authorList>
    </citation>
    <scope>SEQUENCE REVISION</scope>
</reference>
<name>VP6_ROTW3</name>
<dbReference type="EMBL" id="AF411322">
    <property type="protein sequence ID" value="AAM73767.2"/>
    <property type="molecule type" value="mRNA"/>
</dbReference>
<dbReference type="SMR" id="Q8JTI5"/>
<dbReference type="Proteomes" id="UP000007181">
    <property type="component" value="Genome"/>
</dbReference>
<dbReference type="GO" id="GO:0019031">
    <property type="term" value="C:viral envelope"/>
    <property type="evidence" value="ECO:0007669"/>
    <property type="project" value="UniProtKB-UniRule"/>
</dbReference>
<dbReference type="GO" id="GO:0039626">
    <property type="term" value="C:viral intermediate capsid"/>
    <property type="evidence" value="ECO:0007669"/>
    <property type="project" value="UniProtKB-UniRule"/>
</dbReference>
<dbReference type="GO" id="GO:0046789">
    <property type="term" value="F:host cell surface receptor binding"/>
    <property type="evidence" value="ECO:0007669"/>
    <property type="project" value="UniProtKB-UniRule"/>
</dbReference>
<dbReference type="GO" id="GO:0046872">
    <property type="term" value="F:metal ion binding"/>
    <property type="evidence" value="ECO:0007669"/>
    <property type="project" value="UniProtKB-UniRule"/>
</dbReference>
<dbReference type="GO" id="GO:0005198">
    <property type="term" value="F:structural molecule activity"/>
    <property type="evidence" value="ECO:0007669"/>
    <property type="project" value="UniProtKB-UniRule"/>
</dbReference>
<dbReference type="GO" id="GO:0019064">
    <property type="term" value="P:fusion of virus membrane with host plasma membrane"/>
    <property type="evidence" value="ECO:0007669"/>
    <property type="project" value="UniProtKB-UniRule"/>
</dbReference>
<dbReference type="FunFam" id="2.60.120.170:FF:000001">
    <property type="entry name" value="Intermediate capsid protein VP6"/>
    <property type="match status" value="1"/>
</dbReference>
<dbReference type="Gene3D" id="2.60.120.170">
    <property type="match status" value="1"/>
</dbReference>
<dbReference type="Gene3D" id="1.10.1350.10">
    <property type="entry name" value="Viral capsid alpha domain"/>
    <property type="match status" value="1"/>
</dbReference>
<dbReference type="HAMAP" id="MF_04126">
    <property type="entry name" value="Rota_VP6"/>
    <property type="match status" value="1"/>
</dbReference>
<dbReference type="HAMAP" id="MF_04129">
    <property type="entry name" value="Rota_VP6_A"/>
    <property type="match status" value="1"/>
</dbReference>
<dbReference type="InterPro" id="IPR008980">
    <property type="entry name" value="Capsid_hemagglutn"/>
</dbReference>
<dbReference type="InterPro" id="IPR001385">
    <property type="entry name" value="Rotavirus_A/C_VP6"/>
</dbReference>
<dbReference type="InterPro" id="IPR008935">
    <property type="entry name" value="Virus_capsid_a-hlx_vir"/>
</dbReference>
<dbReference type="Pfam" id="PF00980">
    <property type="entry name" value="Rota_Capsid_VP6"/>
    <property type="match status" value="1"/>
</dbReference>
<dbReference type="SUPFAM" id="SSF48345">
    <property type="entry name" value="A virus capsid protein alpha-helical domain"/>
    <property type="match status" value="1"/>
</dbReference>
<dbReference type="SUPFAM" id="SSF49818">
    <property type="entry name" value="Viral protein domain"/>
    <property type="match status" value="1"/>
</dbReference>
<proteinExistence type="evidence at transcript level"/>
<protein>
    <recommendedName>
        <fullName evidence="1">Intermediate capsid protein VP6</fullName>
    </recommendedName>
</protein>
<organism>
    <name type="scientific">Rotavirus A (strain RVA/Cow/United States/WC3/1981/G6P7[5])</name>
    <name type="common">RV-A</name>
    <name type="synonym">Rotavirus (strain Wistar calf 3)</name>
    <dbReference type="NCBI Taxonomy" id="578828"/>
    <lineage>
        <taxon>Viruses</taxon>
        <taxon>Riboviria</taxon>
        <taxon>Orthornavirae</taxon>
        <taxon>Duplornaviricota</taxon>
        <taxon>Resentoviricetes</taxon>
        <taxon>Reovirales</taxon>
        <taxon>Sedoreoviridae</taxon>
        <taxon>Rotavirus</taxon>
        <taxon>Rotavirus A</taxon>
    </lineage>
</organism>
<sequence>MDVLYSLSKTLKDARDKIVEGTLYSNVSDLIQQFNQMIITMNGNEFQTGGIGNLPIRNWNFDFGLLGTTLLNLDANYVETARNTIDYFVDFVDNVCMDEMVRESQRNGIAPQSDSLRKLSGIKFKRINFDNSSEYIENWNLQNRRQRTGFTFHKPNIFPYSASFTLNRSQPAHDNLMGTMWLNAGSEIQVAGFDYSCAINAPANTQQFEHVVQLRRVLTTATITLLPDAERFSFPRVINSADGATTWYFNPVILRPNNVEVEFLLNGQIINTYQARFGTIIARNFDTIRLSFQLMRPPNMTPAVAALFPNAQPFEHHATVGLTLRIESAVCESVLADASETMLANVTSVRQEYAIPVGPVFPPGMNWTDLITNYSPSREDNLQRVFTVASIRSMLVK</sequence>
<evidence type="ECO:0000255" key="1">
    <source>
        <dbReference type="HAMAP-Rule" id="MF_04129"/>
    </source>
</evidence>
<feature type="chain" id="PRO_0000368174" description="Intermediate capsid protein VP6">
    <location>
        <begin position="1"/>
        <end position="397"/>
    </location>
</feature>
<feature type="region of interest" description="Interaction with the inner capsid protein VP2" evidence="1">
    <location>
        <begin position="62"/>
        <end position="73"/>
    </location>
</feature>
<feature type="binding site" evidence="1">
    <location>
        <position position="153"/>
    </location>
    <ligand>
        <name>Zn(2+)</name>
        <dbReference type="ChEBI" id="CHEBI:29105"/>
        <note>ligand shared between all trimeric partners</note>
    </ligand>
</feature>
<feature type="binding site" evidence="1">
    <location>
        <position position="266"/>
    </location>
    <ligand>
        <name>Ca(2+)</name>
        <dbReference type="ChEBI" id="CHEBI:29108"/>
    </ligand>
</feature>
<feature type="binding site" evidence="1">
    <location>
        <position position="286"/>
    </location>
    <ligand>
        <name>Ca(2+)</name>
        <dbReference type="ChEBI" id="CHEBI:29108"/>
    </ligand>
</feature>
<accession>Q8JTI5</accession>